<comment type="function">
    <text evidence="1">Molecular chaperone capable of stabilizing a range of proteins. Seems to fulfill an ATP-independent, HSP70-like function in archaeal de novo protein folding.</text>
</comment>
<comment type="subunit">
    <text evidence="1">Heterohexamer of two alpha and four beta subunits.</text>
</comment>
<comment type="subcellular location">
    <subcellularLocation>
        <location evidence="1">Cytoplasm</location>
    </subcellularLocation>
</comment>
<comment type="similarity">
    <text evidence="1">Belongs to the prefoldin alpha subunit family.</text>
</comment>
<evidence type="ECO:0000255" key="1">
    <source>
        <dbReference type="HAMAP-Rule" id="MF_00308"/>
    </source>
</evidence>
<keyword id="KW-0143">Chaperone</keyword>
<keyword id="KW-0963">Cytoplasm</keyword>
<gene>
    <name evidence="1" type="primary">pfdA</name>
    <name type="ordered locus">MmarC5_0108</name>
</gene>
<reference key="1">
    <citation type="submission" date="2007-03" db="EMBL/GenBank/DDBJ databases">
        <title>Complete sequence of chromosome of Methanococcus maripaludis C5.</title>
        <authorList>
            <consortium name="US DOE Joint Genome Institute"/>
            <person name="Copeland A."/>
            <person name="Lucas S."/>
            <person name="Lapidus A."/>
            <person name="Barry K."/>
            <person name="Glavina del Rio T."/>
            <person name="Dalin E."/>
            <person name="Tice H."/>
            <person name="Pitluck S."/>
            <person name="Chertkov O."/>
            <person name="Brettin T."/>
            <person name="Bruce D."/>
            <person name="Han C."/>
            <person name="Detter J.C."/>
            <person name="Schmutz J."/>
            <person name="Larimer F."/>
            <person name="Land M."/>
            <person name="Hauser L."/>
            <person name="Kyrpides N."/>
            <person name="Mikhailova N."/>
            <person name="Sieprawska-Lupa M."/>
            <person name="Whitman W.B."/>
            <person name="Richardson P."/>
        </authorList>
    </citation>
    <scope>NUCLEOTIDE SEQUENCE [LARGE SCALE GENOMIC DNA]</scope>
    <source>
        <strain>C5 / ATCC BAA-1333</strain>
    </source>
</reference>
<organism>
    <name type="scientific">Methanococcus maripaludis (strain C5 / ATCC BAA-1333)</name>
    <dbReference type="NCBI Taxonomy" id="402880"/>
    <lineage>
        <taxon>Archaea</taxon>
        <taxon>Methanobacteriati</taxon>
        <taxon>Methanobacteriota</taxon>
        <taxon>Methanomada group</taxon>
        <taxon>Methanococci</taxon>
        <taxon>Methanococcales</taxon>
        <taxon>Methanococcaceae</taxon>
        <taxon>Methanococcus</taxon>
    </lineage>
</organism>
<proteinExistence type="inferred from homology"/>
<feature type="chain" id="PRO_1000022798" description="Prefoldin subunit alpha">
    <location>
        <begin position="1"/>
        <end position="144"/>
    </location>
</feature>
<dbReference type="EMBL" id="CP000609">
    <property type="protein sequence ID" value="ABO34425.1"/>
    <property type="molecule type" value="Genomic_DNA"/>
</dbReference>
<dbReference type="RefSeq" id="WP_011867885.1">
    <property type="nucleotide sequence ID" value="NC_009135.1"/>
</dbReference>
<dbReference type="SMR" id="A4FW54"/>
<dbReference type="STRING" id="402880.MmarC5_0108"/>
<dbReference type="GeneID" id="4927576"/>
<dbReference type="KEGG" id="mmq:MmarC5_0108"/>
<dbReference type="eggNOG" id="arCOG01341">
    <property type="taxonomic scope" value="Archaea"/>
</dbReference>
<dbReference type="HOGENOM" id="CLU_091867_1_2_2"/>
<dbReference type="OrthoDB" id="10045at2157"/>
<dbReference type="Proteomes" id="UP000000253">
    <property type="component" value="Chromosome"/>
</dbReference>
<dbReference type="GO" id="GO:0005737">
    <property type="term" value="C:cytoplasm"/>
    <property type="evidence" value="ECO:0007669"/>
    <property type="project" value="UniProtKB-SubCell"/>
</dbReference>
<dbReference type="GO" id="GO:0016272">
    <property type="term" value="C:prefoldin complex"/>
    <property type="evidence" value="ECO:0007669"/>
    <property type="project" value="UniProtKB-UniRule"/>
</dbReference>
<dbReference type="GO" id="GO:0051082">
    <property type="term" value="F:unfolded protein binding"/>
    <property type="evidence" value="ECO:0007669"/>
    <property type="project" value="UniProtKB-UniRule"/>
</dbReference>
<dbReference type="GO" id="GO:0006457">
    <property type="term" value="P:protein folding"/>
    <property type="evidence" value="ECO:0007669"/>
    <property type="project" value="UniProtKB-UniRule"/>
</dbReference>
<dbReference type="CDD" id="cd23160">
    <property type="entry name" value="Prefoldin_alpha_GimC"/>
    <property type="match status" value="1"/>
</dbReference>
<dbReference type="Gene3D" id="1.10.287.370">
    <property type="match status" value="1"/>
</dbReference>
<dbReference type="HAMAP" id="MF_00308">
    <property type="entry name" value="PfdA"/>
    <property type="match status" value="1"/>
</dbReference>
<dbReference type="InterPro" id="IPR011599">
    <property type="entry name" value="PFD_alpha_archaea"/>
</dbReference>
<dbReference type="InterPro" id="IPR009053">
    <property type="entry name" value="Prefoldin"/>
</dbReference>
<dbReference type="InterPro" id="IPR004127">
    <property type="entry name" value="Prefoldin_subunit_alpha"/>
</dbReference>
<dbReference type="NCBIfam" id="TIGR00293">
    <property type="entry name" value="prefoldin subunit alpha"/>
    <property type="match status" value="1"/>
</dbReference>
<dbReference type="Pfam" id="PF02996">
    <property type="entry name" value="Prefoldin"/>
    <property type="match status" value="1"/>
</dbReference>
<dbReference type="SUPFAM" id="SSF46579">
    <property type="entry name" value="Prefoldin"/>
    <property type="match status" value="1"/>
</dbReference>
<accession>A4FW54</accession>
<sequence>MNEELQNQFMALDVYNQQVQKLQEELSNIDMMIMELLKSIESMEGLKTSKEILLPLGAGAFVNAQVQNPEKIVLSVGVDVLLEKDVDEVIVDFQKSVEELEQTKELVNTQIQKTNQEIVKLRSELEKRAAAIEQRSAQMKPRTN</sequence>
<protein>
    <recommendedName>
        <fullName evidence="1">Prefoldin subunit alpha</fullName>
    </recommendedName>
    <alternativeName>
        <fullName evidence="1">GimC subunit alpha</fullName>
    </alternativeName>
</protein>
<name>PFDA_METM5</name>